<protein>
    <recommendedName>
        <fullName>Zinc finger protein 330</fullName>
    </recommendedName>
    <alternativeName>
        <fullName>Nucleolar autoantigen 36</fullName>
    </alternativeName>
    <alternativeName>
        <fullName>Nucleolar cysteine-rich protein</fullName>
    </alternativeName>
</protein>
<evidence type="ECO:0000255" key="1"/>
<evidence type="ECO:0000256" key="2">
    <source>
        <dbReference type="SAM" id="MobiDB-lite"/>
    </source>
</evidence>
<evidence type="ECO:0000269" key="3">
    <source>
    </source>
</evidence>
<evidence type="ECO:0000305" key="4"/>
<evidence type="ECO:0007744" key="5">
    <source>
    </source>
</evidence>
<accession>Q9Y3S2</accession>
<accession>B2RDA3</accession>
<sequence>MPKKKTGARKKAENRREREKQLRASRSTIDLAKHPCNASMECDKCQRRQKNRAFCYFCNSVQKLPICAQCGKTKCMMKSSDCVIKHAGVYSTGLAMVGAICDFCEAWVCHGRKCLSTHACACPLTDAECVECERGVWDHGGRIFSCSFCHNFLCEDDQFEHQASCQVLEAETFKCVSCNRLGQHSCLRCKACFCDDHTRSKVFKQEKGKQPPCPKCGHETQETKDLSMSTRSLKFGRQTGGEEGDGASGYDAYWKNLSSDKYGDTSYHDEEEDEYEAEDDEEEEDEGRKDSDTESSDLFTNLNLGRTYASGYAHYEEQEN</sequence>
<feature type="chain" id="PRO_0000066590" description="Zinc finger protein 330">
    <location>
        <begin position="1"/>
        <end position="320"/>
    </location>
</feature>
<feature type="zinc finger region" description="C4-type 1" evidence="1">
    <location>
        <begin position="42"/>
        <end position="58"/>
    </location>
</feature>
<feature type="zinc finger region" description="C4-type 2" evidence="1">
    <location>
        <begin position="67"/>
        <end position="104"/>
    </location>
</feature>
<feature type="zinc finger region" description="C4-type 3" evidence="1">
    <location>
        <begin position="129"/>
        <end position="149"/>
    </location>
</feature>
<feature type="zinc finger region" description="C4-type 4" evidence="1">
    <location>
        <begin position="175"/>
        <end position="189"/>
    </location>
</feature>
<feature type="region of interest" description="Disordered" evidence="2">
    <location>
        <begin position="1"/>
        <end position="23"/>
    </location>
</feature>
<feature type="region of interest" description="Disordered" evidence="2">
    <location>
        <begin position="206"/>
        <end position="320"/>
    </location>
</feature>
<feature type="short sequence motif" description="Nuclear localization signal" evidence="1">
    <location>
        <begin position="3"/>
        <end position="11"/>
    </location>
</feature>
<feature type="compositionally biased region" description="Basic and acidic residues" evidence="2">
    <location>
        <begin position="10"/>
        <end position="22"/>
    </location>
</feature>
<feature type="compositionally biased region" description="Basic and acidic residues" evidence="2">
    <location>
        <begin position="216"/>
        <end position="225"/>
    </location>
</feature>
<feature type="compositionally biased region" description="Acidic residues" evidence="2">
    <location>
        <begin position="269"/>
        <end position="285"/>
    </location>
</feature>
<feature type="modified residue" description="Phosphoserine" evidence="5">
    <location>
        <position position="291"/>
    </location>
</feature>
<feature type="sequence variant" id="VAR_051500" description="In dbSNP:rs35353789.">
    <original>T</original>
    <variation>A</variation>
    <location>
        <position position="28"/>
    </location>
</feature>
<feature type="sequence variant" id="VAR_051501" description="In dbSNP:rs34631212.">
    <original>L</original>
    <variation>M</variation>
    <location>
        <position position="298"/>
    </location>
</feature>
<dbReference type="EMBL" id="AJ006591">
    <property type="protein sequence ID" value="CAB43112.1"/>
    <property type="molecule type" value="mRNA"/>
</dbReference>
<dbReference type="EMBL" id="AJ404873">
    <property type="protein sequence ID" value="CAC18679.1"/>
    <property type="molecule type" value="Genomic_DNA"/>
</dbReference>
<dbReference type="EMBL" id="AJ404874">
    <property type="protein sequence ID" value="CAC18679.1"/>
    <property type="status" value="JOINED"/>
    <property type="molecule type" value="Genomic_DNA"/>
</dbReference>
<dbReference type="EMBL" id="AJ404875">
    <property type="protein sequence ID" value="CAC18679.1"/>
    <property type="status" value="JOINED"/>
    <property type="molecule type" value="Genomic_DNA"/>
</dbReference>
<dbReference type="EMBL" id="AJ404876">
    <property type="protein sequence ID" value="CAC18679.1"/>
    <property type="status" value="JOINED"/>
    <property type="molecule type" value="Genomic_DNA"/>
</dbReference>
<dbReference type="EMBL" id="AJ404877">
    <property type="protein sequence ID" value="CAC18679.1"/>
    <property type="status" value="JOINED"/>
    <property type="molecule type" value="Genomic_DNA"/>
</dbReference>
<dbReference type="EMBL" id="AJ404878">
    <property type="protein sequence ID" value="CAC18679.1"/>
    <property type="status" value="JOINED"/>
    <property type="molecule type" value="Genomic_DNA"/>
</dbReference>
<dbReference type="EMBL" id="AJ404879">
    <property type="protein sequence ID" value="CAC18679.1"/>
    <property type="status" value="JOINED"/>
    <property type="molecule type" value="Genomic_DNA"/>
</dbReference>
<dbReference type="EMBL" id="AJ404880">
    <property type="protein sequence ID" value="CAC18679.1"/>
    <property type="status" value="JOINED"/>
    <property type="molecule type" value="Genomic_DNA"/>
</dbReference>
<dbReference type="EMBL" id="AK315463">
    <property type="protein sequence ID" value="BAG37850.1"/>
    <property type="molecule type" value="mRNA"/>
</dbReference>
<dbReference type="EMBL" id="CH471056">
    <property type="protein sequence ID" value="EAX05089.1"/>
    <property type="molecule type" value="Genomic_DNA"/>
</dbReference>
<dbReference type="EMBL" id="BC004421">
    <property type="protein sequence ID" value="AAH04421.1"/>
    <property type="molecule type" value="mRNA"/>
</dbReference>
<dbReference type="CCDS" id="CCDS3754.1"/>
<dbReference type="RefSeq" id="NP_001278931.1">
    <property type="nucleotide sequence ID" value="NM_001292002.1"/>
</dbReference>
<dbReference type="RefSeq" id="NP_055302.1">
    <property type="nucleotide sequence ID" value="NM_014487.6"/>
</dbReference>
<dbReference type="RefSeq" id="XP_016863522.1">
    <property type="nucleotide sequence ID" value="XM_017008033.2"/>
</dbReference>
<dbReference type="RefSeq" id="XP_024309754.1">
    <property type="nucleotide sequence ID" value="XM_024453986.2"/>
</dbReference>
<dbReference type="RefSeq" id="XP_047306029.1">
    <property type="nucleotide sequence ID" value="XM_047450073.1"/>
</dbReference>
<dbReference type="RefSeq" id="XP_054205672.1">
    <property type="nucleotide sequence ID" value="XM_054349697.1"/>
</dbReference>
<dbReference type="RefSeq" id="XP_054205673.1">
    <property type="nucleotide sequence ID" value="XM_054349698.1"/>
</dbReference>
<dbReference type="RefSeq" id="XP_054205674.1">
    <property type="nucleotide sequence ID" value="XM_054349699.1"/>
</dbReference>
<dbReference type="BioGRID" id="118131">
    <property type="interactions" value="443"/>
</dbReference>
<dbReference type="FunCoup" id="Q9Y3S2">
    <property type="interactions" value="2128"/>
</dbReference>
<dbReference type="IntAct" id="Q9Y3S2">
    <property type="interactions" value="54"/>
</dbReference>
<dbReference type="MINT" id="Q9Y3S2"/>
<dbReference type="STRING" id="9606.ENSP00000262990"/>
<dbReference type="GlyGen" id="Q9Y3S2">
    <property type="glycosylation" value="1 site, 1 O-linked glycan (1 site)"/>
</dbReference>
<dbReference type="iPTMnet" id="Q9Y3S2"/>
<dbReference type="PhosphoSitePlus" id="Q9Y3S2"/>
<dbReference type="SwissPalm" id="Q9Y3S2"/>
<dbReference type="BioMuta" id="ZNF330"/>
<dbReference type="DMDM" id="51702204"/>
<dbReference type="jPOST" id="Q9Y3S2"/>
<dbReference type="MassIVE" id="Q9Y3S2"/>
<dbReference type="PaxDb" id="9606-ENSP00000262990"/>
<dbReference type="PeptideAtlas" id="Q9Y3S2"/>
<dbReference type="ProteomicsDB" id="86075"/>
<dbReference type="Pumba" id="Q9Y3S2"/>
<dbReference type="Antibodypedia" id="2840">
    <property type="antibodies" value="38 antibodies from 14 providers"/>
</dbReference>
<dbReference type="DNASU" id="27309"/>
<dbReference type="Ensembl" id="ENST00000262990.9">
    <property type="protein sequence ID" value="ENSP00000262990.4"/>
    <property type="gene ID" value="ENSG00000109445.11"/>
</dbReference>
<dbReference type="GeneID" id="27309"/>
<dbReference type="KEGG" id="hsa:27309"/>
<dbReference type="MANE-Select" id="ENST00000262990.9">
    <property type="protein sequence ID" value="ENSP00000262990.4"/>
    <property type="RefSeq nucleotide sequence ID" value="NM_014487.6"/>
    <property type="RefSeq protein sequence ID" value="NP_055302.1"/>
</dbReference>
<dbReference type="UCSC" id="uc003iiq.5">
    <property type="organism name" value="human"/>
</dbReference>
<dbReference type="AGR" id="HGNC:15462"/>
<dbReference type="CTD" id="27309"/>
<dbReference type="GeneCards" id="ZNF330"/>
<dbReference type="HGNC" id="HGNC:15462">
    <property type="gene designation" value="ZNF330"/>
</dbReference>
<dbReference type="HPA" id="ENSG00000109445">
    <property type="expression patterns" value="Low tissue specificity"/>
</dbReference>
<dbReference type="MIM" id="609550">
    <property type="type" value="gene"/>
</dbReference>
<dbReference type="neXtProt" id="NX_Q9Y3S2"/>
<dbReference type="OpenTargets" id="ENSG00000109445"/>
<dbReference type="PharmGKB" id="PA134925405"/>
<dbReference type="VEuPathDB" id="HostDB:ENSG00000109445"/>
<dbReference type="eggNOG" id="ENOG502QRJT">
    <property type="taxonomic scope" value="Eukaryota"/>
</dbReference>
<dbReference type="GeneTree" id="ENSGT00390000017043"/>
<dbReference type="InParanoid" id="Q9Y3S2"/>
<dbReference type="OMA" id="CQRTRRQ"/>
<dbReference type="OrthoDB" id="10258894at2759"/>
<dbReference type="PAN-GO" id="Q9Y3S2">
    <property type="GO annotations" value="1 GO annotation based on evolutionary models"/>
</dbReference>
<dbReference type="PhylomeDB" id="Q9Y3S2"/>
<dbReference type="TreeFam" id="TF323303"/>
<dbReference type="PathwayCommons" id="Q9Y3S2"/>
<dbReference type="SignaLink" id="Q9Y3S2"/>
<dbReference type="BioGRID-ORCS" id="27309">
    <property type="hits" value="20 hits in 1161 CRISPR screens"/>
</dbReference>
<dbReference type="CD-CODE" id="91857CE7">
    <property type="entry name" value="Nucleolus"/>
</dbReference>
<dbReference type="ChiTaRS" id="ZNF330">
    <property type="organism name" value="human"/>
</dbReference>
<dbReference type="GeneWiki" id="ZNF330"/>
<dbReference type="GenomeRNAi" id="27309"/>
<dbReference type="Pharos" id="Q9Y3S2">
    <property type="development level" value="Tdark"/>
</dbReference>
<dbReference type="PRO" id="PR:Q9Y3S2"/>
<dbReference type="Proteomes" id="UP000005640">
    <property type="component" value="Chromosome 4"/>
</dbReference>
<dbReference type="RNAct" id="Q9Y3S2">
    <property type="molecule type" value="protein"/>
</dbReference>
<dbReference type="Bgee" id="ENSG00000109445">
    <property type="expression patterns" value="Expressed in secondary oocyte and 206 other cell types or tissues"/>
</dbReference>
<dbReference type="ExpressionAtlas" id="Q9Y3S2">
    <property type="expression patterns" value="baseline and differential"/>
</dbReference>
<dbReference type="GO" id="GO:0000775">
    <property type="term" value="C:chromosome, centromeric region"/>
    <property type="evidence" value="ECO:0000314"/>
    <property type="project" value="UniProtKB"/>
</dbReference>
<dbReference type="GO" id="GO:0036064">
    <property type="term" value="C:ciliary basal body"/>
    <property type="evidence" value="ECO:0000314"/>
    <property type="project" value="HPA"/>
</dbReference>
<dbReference type="GO" id="GO:0005929">
    <property type="term" value="C:cilium"/>
    <property type="evidence" value="ECO:0000314"/>
    <property type="project" value="HPA"/>
</dbReference>
<dbReference type="GO" id="GO:0005829">
    <property type="term" value="C:cytosol"/>
    <property type="evidence" value="ECO:0000314"/>
    <property type="project" value="HPA"/>
</dbReference>
<dbReference type="GO" id="GO:0030496">
    <property type="term" value="C:midbody"/>
    <property type="evidence" value="ECO:0000314"/>
    <property type="project" value="UniProtKB"/>
</dbReference>
<dbReference type="GO" id="GO:0005730">
    <property type="term" value="C:nucleolus"/>
    <property type="evidence" value="ECO:0000314"/>
    <property type="project" value="UniProtKB"/>
</dbReference>
<dbReference type="GO" id="GO:0005654">
    <property type="term" value="C:nucleoplasm"/>
    <property type="evidence" value="ECO:0000314"/>
    <property type="project" value="HPA"/>
</dbReference>
<dbReference type="GO" id="GO:0005634">
    <property type="term" value="C:nucleus"/>
    <property type="evidence" value="ECO:0000318"/>
    <property type="project" value="GO_Central"/>
</dbReference>
<dbReference type="GO" id="GO:0046872">
    <property type="term" value="F:metal ion binding"/>
    <property type="evidence" value="ECO:0000303"/>
    <property type="project" value="UniProtKB"/>
</dbReference>
<dbReference type="GO" id="GO:0008270">
    <property type="term" value="F:zinc ion binding"/>
    <property type="evidence" value="ECO:0007669"/>
    <property type="project" value="UniProtKB-KW"/>
</dbReference>
<dbReference type="InterPro" id="IPR010531">
    <property type="entry name" value="NOA36"/>
</dbReference>
<dbReference type="PANTHER" id="PTHR13214">
    <property type="entry name" value="ZINC FINGER PROTEIN 330"/>
    <property type="match status" value="1"/>
</dbReference>
<dbReference type="PANTHER" id="PTHR13214:SF1">
    <property type="entry name" value="ZINC FINGER PROTEIN 330"/>
    <property type="match status" value="1"/>
</dbReference>
<dbReference type="Pfam" id="PF06524">
    <property type="entry name" value="NOA36"/>
    <property type="match status" value="1"/>
</dbReference>
<keyword id="KW-0137">Centromere</keyword>
<keyword id="KW-0158">Chromosome</keyword>
<keyword id="KW-0479">Metal-binding</keyword>
<keyword id="KW-0539">Nucleus</keyword>
<keyword id="KW-0597">Phosphoprotein</keyword>
<keyword id="KW-1267">Proteomics identification</keyword>
<keyword id="KW-1185">Reference proteome</keyword>
<keyword id="KW-0677">Repeat</keyword>
<keyword id="KW-0862">Zinc</keyword>
<keyword id="KW-0863">Zinc-finger</keyword>
<gene>
    <name type="primary">ZNF330</name>
    <name type="synonym">NOA36</name>
</gene>
<comment type="interaction">
    <interactant intactId="EBI-373456">
        <id>Q9Y3S2</id>
    </interactant>
    <interactant intactId="EBI-10173507">
        <id>Q6UY14-3</id>
        <label>ADAMTSL4</label>
    </interactant>
    <organismsDiffer>false</organismsDiffer>
    <experiments>3</experiments>
</comment>
<comment type="interaction">
    <interactant intactId="EBI-373456">
        <id>Q9Y3S2</id>
    </interactant>
    <interactant intactId="EBI-3904822">
        <id>P48745</id>
        <label>CCN3</label>
    </interactant>
    <organismsDiffer>false</organismsDiffer>
    <experiments>3</experiments>
</comment>
<comment type="interaction">
    <interactant intactId="EBI-373456">
        <id>Q9Y3S2</id>
    </interactant>
    <interactant intactId="EBI-9038570">
        <id>P27918</id>
        <label>CFP</label>
    </interactant>
    <organismsDiffer>false</organismsDiffer>
    <experiments>3</experiments>
</comment>
<comment type="interaction">
    <interactant intactId="EBI-373456">
        <id>Q9Y3S2</id>
    </interactant>
    <interactant intactId="EBI-741528">
        <id>Q9UKJ5</id>
        <label>CHIC2</label>
    </interactant>
    <organismsDiffer>false</organismsDiffer>
    <experiments>3</experiments>
</comment>
<comment type="interaction">
    <interactant intactId="EBI-373456">
        <id>Q9Y3S2</id>
    </interactant>
    <interactant intactId="EBI-741032">
        <id>Q8NE01</id>
        <label>CNNM3</label>
    </interactant>
    <organismsDiffer>false</organismsDiffer>
    <experiments>3</experiments>
</comment>
<comment type="interaction">
    <interactant intactId="EBI-373456">
        <id>Q9Y3S2</id>
    </interactant>
    <interactant intactId="EBI-10192698">
        <id>Q02930-3</id>
        <label>CREB5</label>
    </interactant>
    <organismsDiffer>false</organismsDiffer>
    <experiments>3</experiments>
</comment>
<comment type="interaction">
    <interactant intactId="EBI-373456">
        <id>Q9Y3S2</id>
    </interactant>
    <interactant intactId="EBI-3867333">
        <id>A8MQ03</id>
        <label>CYSRT1</label>
    </interactant>
    <organismsDiffer>false</organismsDiffer>
    <experiments>3</experiments>
</comment>
<comment type="interaction">
    <interactant intactId="EBI-373456">
        <id>Q9Y3S2</id>
    </interactant>
    <interactant intactId="EBI-2796400">
        <id>Q9UIH9</id>
        <label>KLF15</label>
    </interactant>
    <organismsDiffer>false</organismsDiffer>
    <experiments>5</experiments>
</comment>
<comment type="interaction">
    <interactant intactId="EBI-373456">
        <id>Q9Y3S2</id>
    </interactant>
    <interactant intactId="EBI-11959885">
        <id>Q07627</id>
        <label>KRTAP1-1</label>
    </interactant>
    <organismsDiffer>false</organismsDiffer>
    <experiments>3</experiments>
</comment>
<comment type="interaction">
    <interactant intactId="EBI-373456">
        <id>Q9Y3S2</id>
    </interactant>
    <interactant intactId="EBI-11749135">
        <id>Q8IUG1</id>
        <label>KRTAP1-3</label>
    </interactant>
    <organismsDiffer>false</organismsDiffer>
    <experiments>3</experiments>
</comment>
<comment type="interaction">
    <interactant intactId="EBI-373456">
        <id>Q9Y3S2</id>
    </interactant>
    <interactant intactId="EBI-10171774">
        <id>P60410</id>
        <label>KRTAP10-8</label>
    </interactant>
    <organismsDiffer>false</organismsDiffer>
    <experiments>3</experiments>
</comment>
<comment type="interaction">
    <interactant intactId="EBI-373456">
        <id>Q9Y3S2</id>
    </interactant>
    <interactant intactId="EBI-10241252">
        <id>Q3SY46</id>
        <label>KRTAP13-3</label>
    </interactant>
    <organismsDiffer>false</organismsDiffer>
    <experiments>3</experiments>
</comment>
<comment type="interaction">
    <interactant intactId="EBI-373456">
        <id>Q9Y3S2</id>
    </interactant>
    <interactant intactId="EBI-11987425">
        <id>Q6L8G8</id>
        <label>KRTAP5-7</label>
    </interactant>
    <organismsDiffer>false</organismsDiffer>
    <experiments>3</experiments>
</comment>
<comment type="interaction">
    <interactant intactId="EBI-373456">
        <id>Q9Y3S2</id>
    </interactant>
    <interactant intactId="EBI-724076">
        <id>Q99750</id>
        <label>MDFI</label>
    </interactant>
    <organismsDiffer>false</organismsDiffer>
    <experiments>3</experiments>
</comment>
<comment type="interaction">
    <interactant intactId="EBI-373456">
        <id>Q9Y3S2</id>
    </interactant>
    <interactant intactId="EBI-16439278">
        <id>Q6FHY5</id>
        <label>MEOX2</label>
    </interactant>
    <organismsDiffer>false</organismsDiffer>
    <experiments>3</experiments>
</comment>
<comment type="interaction">
    <interactant intactId="EBI-373456">
        <id>Q9Y3S2</id>
    </interactant>
    <interactant intactId="EBI-1246238">
        <id>P17568</id>
        <label>NDUFB7</label>
    </interactant>
    <organismsDiffer>false</organismsDiffer>
    <experiments>3</experiments>
</comment>
<comment type="interaction">
    <interactant intactId="EBI-373456">
        <id>Q9Y3S2</id>
    </interactant>
    <interactant intactId="EBI-22310682">
        <id>P0DPK4</id>
        <label>NOTCH2NLC</label>
    </interactant>
    <organismsDiffer>false</organismsDiffer>
    <experiments>3</experiments>
</comment>
<comment type="interaction">
    <interactant intactId="EBI-373456">
        <id>Q9Y3S2</id>
    </interactant>
    <interactant intactId="EBI-13644623">
        <id>Q92570</id>
        <label>NR4A3</label>
    </interactant>
    <organismsDiffer>false</organismsDiffer>
    <experiments>3</experiments>
</comment>
<comment type="interaction">
    <interactant intactId="EBI-373456">
        <id>Q9Y3S2</id>
    </interactant>
    <interactant intactId="EBI-740446">
        <id>P32242</id>
        <label>OTX1</label>
    </interactant>
    <organismsDiffer>false</organismsDiffer>
    <experiments>3</experiments>
</comment>
<comment type="interaction">
    <interactant intactId="EBI-373456">
        <id>Q9Y3S2</id>
    </interactant>
    <interactant intactId="EBI-10302990">
        <id>Q9BYU1</id>
        <label>PBX4</label>
    </interactant>
    <organismsDiffer>false</organismsDiffer>
    <experiments>3</experiments>
</comment>
<comment type="interaction">
    <interactant intactId="EBI-373456">
        <id>Q9Y3S2</id>
    </interactant>
    <interactant intactId="EBI-79165">
        <id>Q9NRD5</id>
        <label>PICK1</label>
    </interactant>
    <organismsDiffer>false</organismsDiffer>
    <experiments>3</experiments>
</comment>
<comment type="interaction">
    <interactant intactId="EBI-373456">
        <id>Q9Y3S2</id>
    </interactant>
    <interactant intactId="EBI-1210429">
        <id>Q9NYW8</id>
        <label>RBAK</label>
    </interactant>
    <organismsDiffer>false</organismsDiffer>
    <experiments>3</experiments>
</comment>
<comment type="interaction">
    <interactant intactId="EBI-373456">
        <id>Q9Y3S2</id>
    </interactant>
    <interactant intactId="EBI-12009390">
        <id>Q6UXX9-2</id>
        <label>RSPO2</label>
    </interactant>
    <organismsDiffer>false</organismsDiffer>
    <experiments>3</experiments>
</comment>
<comment type="interaction">
    <interactant intactId="EBI-373456">
        <id>Q9Y3S2</id>
    </interactant>
    <interactant intactId="EBI-12821217">
        <id>Q2I0M5</id>
        <label>RSPO4</label>
    </interactant>
    <organismsDiffer>false</organismsDiffer>
    <experiments>3</experiments>
</comment>
<comment type="interaction">
    <interactant intactId="EBI-373456">
        <id>Q9Y3S2</id>
    </interactant>
    <interactant intactId="EBI-743971">
        <id>Q6NW29</id>
        <label>RWDD4</label>
    </interactant>
    <organismsDiffer>false</organismsDiffer>
    <experiments>8</experiments>
</comment>
<comment type="interaction">
    <interactant intactId="EBI-373456">
        <id>Q9Y3S2</id>
    </interactant>
    <interactant intactId="EBI-3866665">
        <id>O43609</id>
        <label>SPRY1</label>
    </interactant>
    <organismsDiffer>false</organismsDiffer>
    <experiments>3</experiments>
</comment>
<comment type="interaction">
    <interactant intactId="EBI-373456">
        <id>Q9Y3S2</id>
    </interactant>
    <interactant intactId="EBI-749295">
        <id>O75716</id>
        <label>STK16</label>
    </interactant>
    <organismsDiffer>false</organismsDiffer>
    <experiments>6</experiments>
</comment>
<comment type="interaction">
    <interactant intactId="EBI-373456">
        <id>Q9Y3S2</id>
    </interactant>
    <interactant intactId="EBI-8484990">
        <id>Q8N4C7</id>
        <label>STX19</label>
    </interactant>
    <organismsDiffer>false</organismsDiffer>
    <experiments>3</experiments>
</comment>
<comment type="interaction">
    <interactant intactId="EBI-373456">
        <id>Q9Y3S2</id>
    </interactant>
    <interactant intactId="EBI-740595">
        <id>Q9UMX1</id>
        <label>SUFU</label>
    </interactant>
    <organismsDiffer>false</organismsDiffer>
    <experiments>3</experiments>
</comment>
<comment type="interaction">
    <interactant intactId="EBI-373456">
        <id>Q9Y3S2</id>
    </interactant>
    <interactant intactId="EBI-727338">
        <id>O95988</id>
        <label>TCL1B</label>
    </interactant>
    <organismsDiffer>false</organismsDiffer>
    <experiments>6</experiments>
</comment>
<comment type="interaction">
    <interactant intactId="EBI-373456">
        <id>Q9Y3S2</id>
    </interactant>
    <interactant intactId="EBI-11741437">
        <id>Q08117-2</id>
        <label>TLE5</label>
    </interactant>
    <organismsDiffer>false</organismsDiffer>
    <experiments>5</experiments>
</comment>
<comment type="interaction">
    <interactant intactId="EBI-373456">
        <id>Q9Y3S2</id>
    </interactant>
    <interactant intactId="EBI-5235829">
        <id>Q8IWZ5</id>
        <label>TRIM42</label>
    </interactant>
    <organismsDiffer>false</organismsDiffer>
    <experiments>3</experiments>
</comment>
<comment type="interaction">
    <interactant intactId="EBI-373456">
        <id>Q9Y3S2</id>
    </interactant>
    <interactant intactId="EBI-12287587">
        <id>B2RXF5</id>
        <label>ZBTB42</label>
    </interactant>
    <organismsDiffer>false</organismsDiffer>
    <experiments>3</experiments>
</comment>
<comment type="interaction">
    <interactant intactId="EBI-373456">
        <id>Q9Y3S2</id>
    </interactant>
    <interactant intactId="EBI-5657766">
        <id>P17027</id>
        <label>ZNF23</label>
    </interactant>
    <organismsDiffer>false</organismsDiffer>
    <experiments>3</experiments>
</comment>
<comment type="interaction">
    <interactant intactId="EBI-373456">
        <id>Q9Y3S2</id>
    </interactant>
    <interactant intactId="EBI-10177272">
        <id>P15622-3</id>
        <label>ZNF250</label>
    </interactant>
    <organismsDiffer>false</organismsDiffer>
    <experiments>3</experiments>
</comment>
<comment type="interaction">
    <interactant intactId="EBI-373456">
        <id>Q9Y3S2</id>
    </interactant>
    <interactant intactId="EBI-347633">
        <id>Q9H9D4</id>
        <label>ZNF408</label>
    </interactant>
    <organismsDiffer>false</organismsDiffer>
    <experiments>4</experiments>
</comment>
<comment type="interaction">
    <interactant intactId="EBI-373456">
        <id>Q9Y3S2</id>
    </interactant>
    <interactant intactId="EBI-743265">
        <id>Q9BUY5</id>
        <label>ZNF426</label>
    </interactant>
    <organismsDiffer>false</organismsDiffer>
    <experiments>3</experiments>
</comment>
<comment type="interaction">
    <interactant intactId="EBI-373456">
        <id>Q9Y3S2</id>
    </interactant>
    <interactant intactId="EBI-726439">
        <id>Q8IYI8</id>
        <label>ZNF440</label>
    </interactant>
    <organismsDiffer>false</organismsDiffer>
    <experiments>3</experiments>
</comment>
<comment type="interaction">
    <interactant intactId="EBI-373456">
        <id>Q9Y3S2</id>
    </interactant>
    <interactant intactId="EBI-2555738">
        <id>Q14592</id>
        <label>ZNF460</label>
    </interactant>
    <organismsDiffer>false</organismsDiffer>
    <experiments>3</experiments>
</comment>
<comment type="interaction">
    <interactant intactId="EBI-373456">
        <id>Q9Y3S2</id>
    </interactant>
    <interactant intactId="EBI-12895421">
        <id>Q8IVP9</id>
        <label>ZNF547</label>
    </interactant>
    <organismsDiffer>false</organismsDiffer>
    <experiments>5</experiments>
</comment>
<comment type="interaction">
    <interactant intactId="EBI-373456">
        <id>Q9Y3S2</id>
    </interactant>
    <interactant intactId="EBI-6427977">
        <id>Q96SQ5</id>
        <label>ZNF587</label>
    </interactant>
    <organismsDiffer>false</organismsDiffer>
    <experiments>3</experiments>
</comment>
<comment type="interaction">
    <interactant intactId="EBI-373456">
        <id>Q9Y3S2</id>
    </interactant>
    <interactant intactId="EBI-625509">
        <id>Q8N720</id>
        <label>ZNF655</label>
    </interactant>
    <organismsDiffer>false</organismsDiffer>
    <experiments>3</experiments>
</comment>
<comment type="interaction">
    <interactant intactId="EBI-373456">
        <id>Q9Y3S2</id>
    </interactant>
    <interactant intactId="EBI-2799450">
        <id>Q8N3J9</id>
        <label>ZNF664</label>
    </interactant>
    <organismsDiffer>false</organismsDiffer>
    <experiments>3</experiments>
</comment>
<comment type="interaction">
    <interactant intactId="EBI-373456">
        <id>Q9Y3S2</id>
    </interactant>
    <interactant intactId="EBI-12006574">
        <id>Q96BR6</id>
        <label>ZNF669</label>
    </interactant>
    <organismsDiffer>false</organismsDiffer>
    <experiments>3</experiments>
</comment>
<comment type="interaction">
    <interactant intactId="EBI-373456">
        <id>Q9Y3S2</id>
    </interactant>
    <interactant intactId="EBI-12005952">
        <id>Q8IZ20</id>
        <label>ZNF683</label>
    </interactant>
    <organismsDiffer>false</organismsDiffer>
    <experiments>3</experiments>
</comment>
<comment type="interaction">
    <interactant intactId="EBI-373456">
        <id>Q9Y3S2</id>
    </interactant>
    <interactant intactId="EBI-4395732">
        <id>P0C7X2</id>
        <label>ZNF688</label>
    </interactant>
    <organismsDiffer>false</organismsDiffer>
    <experiments>3</experiments>
</comment>
<comment type="interaction">
    <interactant intactId="EBI-373456">
        <id>Q9Y3S2</id>
    </interactant>
    <interactant intactId="EBI-745775">
        <id>Q96H86</id>
        <label>ZNF764</label>
    </interactant>
    <organismsDiffer>false</organismsDiffer>
    <experiments>3</experiments>
</comment>
<comment type="interaction">
    <interactant intactId="EBI-373456">
        <id>Q9Y3S2</id>
    </interactant>
    <interactant intactId="EBI-1210580">
        <id>Q9H5H4</id>
        <label>ZNF768</label>
    </interactant>
    <organismsDiffer>false</organismsDiffer>
    <experiments>3</experiments>
</comment>
<comment type="interaction">
    <interactant intactId="EBI-373456">
        <id>Q9Y3S2</id>
    </interactant>
    <interactant intactId="EBI-11962574">
        <id>Q96EG3</id>
        <label>ZNF837</label>
    </interactant>
    <organismsDiffer>false</organismsDiffer>
    <experiments>6</experiments>
</comment>
<comment type="subcellular location">
    <subcellularLocation>
        <location evidence="3">Nucleus</location>
    </subcellularLocation>
    <subcellularLocation>
        <location evidence="3">Nucleus</location>
        <location evidence="3">Nucleolus</location>
    </subcellularLocation>
    <subcellularLocation>
        <location evidence="3">Chromosome</location>
        <location evidence="3">Centromere</location>
    </subcellularLocation>
    <text>Predominantly expressed in the nucleolus. In mitosis associated with centromeres and concentrated at the midbody in cytokinesis.</text>
</comment>
<comment type="tissue specificity">
    <text evidence="3">Widely expressed. Higher expression seen in heart and skeletal muscle.</text>
</comment>
<comment type="similarity">
    <text evidence="4">Belongs to the NOA36 family.</text>
</comment>
<reference key="1">
    <citation type="journal article" date="1999" name="J. Biol. Chem.">
        <title>Molecular cloning of a zinc finger autoantigen transiently associated with interphase nucleolus and mitotic centromeres and midbodies. Orthologous proteins with nine CXXC motifs highly conserved from nematodes to humans.</title>
        <authorList>
            <person name="Bolivar J."/>
            <person name="Diaz I."/>
            <person name="Iglesias C."/>
            <person name="Valdivia M.M."/>
        </authorList>
    </citation>
    <scope>NUCLEOTIDE SEQUENCE [MRNA]</scope>
    <scope>SUBCELLULAR LOCATION</scope>
    <scope>TISSUE SPECIFICITY</scope>
</reference>
<reference key="2">
    <citation type="submission" date="2000-07" db="EMBL/GenBank/DDBJ databases">
        <title>Genomic structure and chromosomal localization of the human zinc finger autoantigen NOA36.</title>
        <authorList>
            <person name="Bolivar J."/>
        </authorList>
    </citation>
    <scope>NUCLEOTIDE SEQUENCE [GENOMIC DNA]</scope>
</reference>
<reference key="3">
    <citation type="journal article" date="2004" name="Nat. Genet.">
        <title>Complete sequencing and characterization of 21,243 full-length human cDNAs.</title>
        <authorList>
            <person name="Ota T."/>
            <person name="Suzuki Y."/>
            <person name="Nishikawa T."/>
            <person name="Otsuki T."/>
            <person name="Sugiyama T."/>
            <person name="Irie R."/>
            <person name="Wakamatsu A."/>
            <person name="Hayashi K."/>
            <person name="Sato H."/>
            <person name="Nagai K."/>
            <person name="Kimura K."/>
            <person name="Makita H."/>
            <person name="Sekine M."/>
            <person name="Obayashi M."/>
            <person name="Nishi T."/>
            <person name="Shibahara T."/>
            <person name="Tanaka T."/>
            <person name="Ishii S."/>
            <person name="Yamamoto J."/>
            <person name="Saito K."/>
            <person name="Kawai Y."/>
            <person name="Isono Y."/>
            <person name="Nakamura Y."/>
            <person name="Nagahari K."/>
            <person name="Murakami K."/>
            <person name="Yasuda T."/>
            <person name="Iwayanagi T."/>
            <person name="Wagatsuma M."/>
            <person name="Shiratori A."/>
            <person name="Sudo H."/>
            <person name="Hosoiri T."/>
            <person name="Kaku Y."/>
            <person name="Kodaira H."/>
            <person name="Kondo H."/>
            <person name="Sugawara M."/>
            <person name="Takahashi M."/>
            <person name="Kanda K."/>
            <person name="Yokoi T."/>
            <person name="Furuya T."/>
            <person name="Kikkawa E."/>
            <person name="Omura Y."/>
            <person name="Abe K."/>
            <person name="Kamihara K."/>
            <person name="Katsuta N."/>
            <person name="Sato K."/>
            <person name="Tanikawa M."/>
            <person name="Yamazaki M."/>
            <person name="Ninomiya K."/>
            <person name="Ishibashi T."/>
            <person name="Yamashita H."/>
            <person name="Murakawa K."/>
            <person name="Fujimori K."/>
            <person name="Tanai H."/>
            <person name="Kimata M."/>
            <person name="Watanabe M."/>
            <person name="Hiraoka S."/>
            <person name="Chiba Y."/>
            <person name="Ishida S."/>
            <person name="Ono Y."/>
            <person name="Takiguchi S."/>
            <person name="Watanabe S."/>
            <person name="Yosida M."/>
            <person name="Hotuta T."/>
            <person name="Kusano J."/>
            <person name="Kanehori K."/>
            <person name="Takahashi-Fujii A."/>
            <person name="Hara H."/>
            <person name="Tanase T.-O."/>
            <person name="Nomura Y."/>
            <person name="Togiya S."/>
            <person name="Komai F."/>
            <person name="Hara R."/>
            <person name="Takeuchi K."/>
            <person name="Arita M."/>
            <person name="Imose N."/>
            <person name="Musashino K."/>
            <person name="Yuuki H."/>
            <person name="Oshima A."/>
            <person name="Sasaki N."/>
            <person name="Aotsuka S."/>
            <person name="Yoshikawa Y."/>
            <person name="Matsunawa H."/>
            <person name="Ichihara T."/>
            <person name="Shiohata N."/>
            <person name="Sano S."/>
            <person name="Moriya S."/>
            <person name="Momiyama H."/>
            <person name="Satoh N."/>
            <person name="Takami S."/>
            <person name="Terashima Y."/>
            <person name="Suzuki O."/>
            <person name="Nakagawa S."/>
            <person name="Senoh A."/>
            <person name="Mizoguchi H."/>
            <person name="Goto Y."/>
            <person name="Shimizu F."/>
            <person name="Wakebe H."/>
            <person name="Hishigaki H."/>
            <person name="Watanabe T."/>
            <person name="Sugiyama A."/>
            <person name="Takemoto M."/>
            <person name="Kawakami B."/>
            <person name="Yamazaki M."/>
            <person name="Watanabe K."/>
            <person name="Kumagai A."/>
            <person name="Itakura S."/>
            <person name="Fukuzumi Y."/>
            <person name="Fujimori Y."/>
            <person name="Komiyama M."/>
            <person name="Tashiro H."/>
            <person name="Tanigami A."/>
            <person name="Fujiwara T."/>
            <person name="Ono T."/>
            <person name="Yamada K."/>
            <person name="Fujii Y."/>
            <person name="Ozaki K."/>
            <person name="Hirao M."/>
            <person name="Ohmori Y."/>
            <person name="Kawabata A."/>
            <person name="Hikiji T."/>
            <person name="Kobatake N."/>
            <person name="Inagaki H."/>
            <person name="Ikema Y."/>
            <person name="Okamoto S."/>
            <person name="Okitani R."/>
            <person name="Kawakami T."/>
            <person name="Noguchi S."/>
            <person name="Itoh T."/>
            <person name="Shigeta K."/>
            <person name="Senba T."/>
            <person name="Matsumura K."/>
            <person name="Nakajima Y."/>
            <person name="Mizuno T."/>
            <person name="Morinaga M."/>
            <person name="Sasaki M."/>
            <person name="Togashi T."/>
            <person name="Oyama M."/>
            <person name="Hata H."/>
            <person name="Watanabe M."/>
            <person name="Komatsu T."/>
            <person name="Mizushima-Sugano J."/>
            <person name="Satoh T."/>
            <person name="Shirai Y."/>
            <person name="Takahashi Y."/>
            <person name="Nakagawa K."/>
            <person name="Okumura K."/>
            <person name="Nagase T."/>
            <person name="Nomura N."/>
            <person name="Kikuchi H."/>
            <person name="Masuho Y."/>
            <person name="Yamashita R."/>
            <person name="Nakai K."/>
            <person name="Yada T."/>
            <person name="Nakamura Y."/>
            <person name="Ohara O."/>
            <person name="Isogai T."/>
            <person name="Sugano S."/>
        </authorList>
    </citation>
    <scope>NUCLEOTIDE SEQUENCE [LARGE SCALE MRNA]</scope>
    <source>
        <tissue>Kidney</tissue>
    </source>
</reference>
<reference key="4">
    <citation type="submission" date="2005-09" db="EMBL/GenBank/DDBJ databases">
        <authorList>
            <person name="Mural R.J."/>
            <person name="Istrail S."/>
            <person name="Sutton G.G."/>
            <person name="Florea L."/>
            <person name="Halpern A.L."/>
            <person name="Mobarry C.M."/>
            <person name="Lippert R."/>
            <person name="Walenz B."/>
            <person name="Shatkay H."/>
            <person name="Dew I."/>
            <person name="Miller J.R."/>
            <person name="Flanigan M.J."/>
            <person name="Edwards N.J."/>
            <person name="Bolanos R."/>
            <person name="Fasulo D."/>
            <person name="Halldorsson B.V."/>
            <person name="Hannenhalli S."/>
            <person name="Turner R."/>
            <person name="Yooseph S."/>
            <person name="Lu F."/>
            <person name="Nusskern D.R."/>
            <person name="Shue B.C."/>
            <person name="Zheng X.H."/>
            <person name="Zhong F."/>
            <person name="Delcher A.L."/>
            <person name="Huson D.H."/>
            <person name="Kravitz S.A."/>
            <person name="Mouchard L."/>
            <person name="Reinert K."/>
            <person name="Remington K.A."/>
            <person name="Clark A.G."/>
            <person name="Waterman M.S."/>
            <person name="Eichler E.E."/>
            <person name="Adams M.D."/>
            <person name="Hunkapiller M.W."/>
            <person name="Myers E.W."/>
            <person name="Venter J.C."/>
        </authorList>
    </citation>
    <scope>NUCLEOTIDE SEQUENCE [LARGE SCALE GENOMIC DNA]</scope>
</reference>
<reference key="5">
    <citation type="journal article" date="2004" name="Genome Res.">
        <title>The status, quality, and expansion of the NIH full-length cDNA project: the Mammalian Gene Collection (MGC).</title>
        <authorList>
            <consortium name="The MGC Project Team"/>
        </authorList>
    </citation>
    <scope>NUCLEOTIDE SEQUENCE [LARGE SCALE MRNA]</scope>
    <source>
        <tissue>Eye</tissue>
    </source>
</reference>
<reference key="6">
    <citation type="journal article" date="2009" name="Sci. Signal.">
        <title>Quantitative phosphoproteomic analysis of T cell receptor signaling reveals system-wide modulation of protein-protein interactions.</title>
        <authorList>
            <person name="Mayya V."/>
            <person name="Lundgren D.H."/>
            <person name="Hwang S.-I."/>
            <person name="Rezaul K."/>
            <person name="Wu L."/>
            <person name="Eng J.K."/>
            <person name="Rodionov V."/>
            <person name="Han D.K."/>
        </authorList>
    </citation>
    <scope>IDENTIFICATION BY MASS SPECTROMETRY [LARGE SCALE ANALYSIS]</scope>
    <source>
        <tissue>Leukemic T-cell</tissue>
    </source>
</reference>
<reference key="7">
    <citation type="journal article" date="2011" name="BMC Syst. Biol.">
        <title>Initial characterization of the human central proteome.</title>
        <authorList>
            <person name="Burkard T.R."/>
            <person name="Planyavsky M."/>
            <person name="Kaupe I."/>
            <person name="Breitwieser F.P."/>
            <person name="Buerckstuemmer T."/>
            <person name="Bennett K.L."/>
            <person name="Superti-Furga G."/>
            <person name="Colinge J."/>
        </authorList>
    </citation>
    <scope>IDENTIFICATION BY MASS SPECTROMETRY [LARGE SCALE ANALYSIS]</scope>
</reference>
<reference key="8">
    <citation type="journal article" date="2012" name="Proc. Natl. Acad. Sci. U.S.A.">
        <title>N-terminal acetylome analyses and functional insights of the N-terminal acetyltransferase NatB.</title>
        <authorList>
            <person name="Van Damme P."/>
            <person name="Lasa M."/>
            <person name="Polevoda B."/>
            <person name="Gazquez C."/>
            <person name="Elosegui-Artola A."/>
            <person name="Kim D.S."/>
            <person name="De Juan-Pardo E."/>
            <person name="Demeyer K."/>
            <person name="Hole K."/>
            <person name="Larrea E."/>
            <person name="Timmerman E."/>
            <person name="Prieto J."/>
            <person name="Arnesen T."/>
            <person name="Sherman F."/>
            <person name="Gevaert K."/>
            <person name="Aldabe R."/>
        </authorList>
    </citation>
    <scope>IDENTIFICATION BY MASS SPECTROMETRY [LARGE SCALE ANALYSIS]</scope>
</reference>
<reference key="9">
    <citation type="journal article" date="2013" name="J. Proteome Res.">
        <title>Toward a comprehensive characterization of a human cancer cell phosphoproteome.</title>
        <authorList>
            <person name="Zhou H."/>
            <person name="Di Palma S."/>
            <person name="Preisinger C."/>
            <person name="Peng M."/>
            <person name="Polat A.N."/>
            <person name="Heck A.J."/>
            <person name="Mohammed S."/>
        </authorList>
    </citation>
    <scope>PHOSPHORYLATION [LARGE SCALE ANALYSIS] AT SER-291</scope>
    <scope>IDENTIFICATION BY MASS SPECTROMETRY [LARGE SCALE ANALYSIS]</scope>
    <source>
        <tissue>Cervix carcinoma</tissue>
        <tissue>Erythroleukemia</tissue>
    </source>
</reference>
<name>ZN330_HUMAN</name>
<proteinExistence type="evidence at protein level"/>
<organism>
    <name type="scientific">Homo sapiens</name>
    <name type="common">Human</name>
    <dbReference type="NCBI Taxonomy" id="9606"/>
    <lineage>
        <taxon>Eukaryota</taxon>
        <taxon>Metazoa</taxon>
        <taxon>Chordata</taxon>
        <taxon>Craniata</taxon>
        <taxon>Vertebrata</taxon>
        <taxon>Euteleostomi</taxon>
        <taxon>Mammalia</taxon>
        <taxon>Eutheria</taxon>
        <taxon>Euarchontoglires</taxon>
        <taxon>Primates</taxon>
        <taxon>Haplorrhini</taxon>
        <taxon>Catarrhini</taxon>
        <taxon>Hominidae</taxon>
        <taxon>Homo</taxon>
    </lineage>
</organism>